<protein>
    <recommendedName>
        <fullName evidence="1">Phosphate acyltransferase</fullName>
        <ecNumber evidence="1">2.3.1.274</ecNumber>
    </recommendedName>
    <alternativeName>
        <fullName evidence="1">Acyl-ACP phosphotransacylase</fullName>
    </alternativeName>
    <alternativeName>
        <fullName evidence="1">Acyl-[acyl-carrier-protein]--phosphate acyltransferase</fullName>
    </alternativeName>
    <alternativeName>
        <fullName evidence="1">Phosphate-acyl-ACP acyltransferase</fullName>
    </alternativeName>
</protein>
<sequence>MKIAIDGMGGDNAPVAVIDGAIQALKAYDDIQLYITGPEEVLNIELAKYTYPKEKVIVVDAKEVISPNEHPVMALRKKKNSSIVKALNLVKEGICDAVVSGGSTGAFLAGCTLIIGRIKGIERPALAPIMPGRRGKFMIVDVGANVDCKPSFLVQFAKMGKIYYQKVFNVKNPTIGLINIGEEEEKGNELTKAAFKLLKEESSINFKGNIEPREIPTGDTNILVSDGFVGNTALKMYEGSASSILGIIKDEVLKSSIISKIGVVLLKPVLKNIMKKFDYKEYGGAPFLGVDGICIKAHGSSDARAFKNSIKQTKIFYDNNVLKDIRNEFSSEN</sequence>
<feature type="chain" id="PRO_1000074160" description="Phosphate acyltransferase">
    <location>
        <begin position="1"/>
        <end position="333"/>
    </location>
</feature>
<dbReference type="EC" id="2.3.1.274" evidence="1"/>
<dbReference type="EMBL" id="CP000721">
    <property type="protein sequence ID" value="ABR33350.1"/>
    <property type="molecule type" value="Genomic_DNA"/>
</dbReference>
<dbReference type="RefSeq" id="WP_011968507.1">
    <property type="nucleotide sequence ID" value="NC_009617.1"/>
</dbReference>
<dbReference type="SMR" id="A6LSM0"/>
<dbReference type="KEGG" id="cbe:Cbei_1168"/>
<dbReference type="eggNOG" id="COG0416">
    <property type="taxonomic scope" value="Bacteria"/>
</dbReference>
<dbReference type="HOGENOM" id="CLU_039379_1_1_9"/>
<dbReference type="UniPathway" id="UPA00085"/>
<dbReference type="Proteomes" id="UP000000565">
    <property type="component" value="Chromosome"/>
</dbReference>
<dbReference type="GO" id="GO:0005737">
    <property type="term" value="C:cytoplasm"/>
    <property type="evidence" value="ECO:0007669"/>
    <property type="project" value="UniProtKB-SubCell"/>
</dbReference>
<dbReference type="GO" id="GO:0043811">
    <property type="term" value="F:phosphate:acyl-[acyl carrier protein] acyltransferase activity"/>
    <property type="evidence" value="ECO:0007669"/>
    <property type="project" value="UniProtKB-UniRule"/>
</dbReference>
<dbReference type="GO" id="GO:0006633">
    <property type="term" value="P:fatty acid biosynthetic process"/>
    <property type="evidence" value="ECO:0007669"/>
    <property type="project" value="UniProtKB-UniRule"/>
</dbReference>
<dbReference type="GO" id="GO:0008654">
    <property type="term" value="P:phospholipid biosynthetic process"/>
    <property type="evidence" value="ECO:0007669"/>
    <property type="project" value="UniProtKB-KW"/>
</dbReference>
<dbReference type="Gene3D" id="3.40.718.10">
    <property type="entry name" value="Isopropylmalate Dehydrogenase"/>
    <property type="match status" value="1"/>
</dbReference>
<dbReference type="HAMAP" id="MF_00019">
    <property type="entry name" value="PlsX"/>
    <property type="match status" value="1"/>
</dbReference>
<dbReference type="InterPro" id="IPR003664">
    <property type="entry name" value="FA_synthesis"/>
</dbReference>
<dbReference type="InterPro" id="IPR012281">
    <property type="entry name" value="Phospholipid_synth_PlsX-like"/>
</dbReference>
<dbReference type="NCBIfam" id="TIGR00182">
    <property type="entry name" value="plsX"/>
    <property type="match status" value="1"/>
</dbReference>
<dbReference type="PANTHER" id="PTHR30100">
    <property type="entry name" value="FATTY ACID/PHOSPHOLIPID SYNTHESIS PROTEIN PLSX"/>
    <property type="match status" value="1"/>
</dbReference>
<dbReference type="PANTHER" id="PTHR30100:SF1">
    <property type="entry name" value="PHOSPHATE ACYLTRANSFERASE"/>
    <property type="match status" value="1"/>
</dbReference>
<dbReference type="Pfam" id="PF02504">
    <property type="entry name" value="FA_synthesis"/>
    <property type="match status" value="1"/>
</dbReference>
<dbReference type="PIRSF" id="PIRSF002465">
    <property type="entry name" value="Phsphlp_syn_PlsX"/>
    <property type="match status" value="1"/>
</dbReference>
<dbReference type="SUPFAM" id="SSF53659">
    <property type="entry name" value="Isocitrate/Isopropylmalate dehydrogenase-like"/>
    <property type="match status" value="1"/>
</dbReference>
<comment type="function">
    <text evidence="1">Catalyzes the reversible formation of acyl-phosphate (acyl-PO(4)) from acyl-[acyl-carrier-protein] (acyl-ACP). This enzyme utilizes acyl-ACP as fatty acyl donor, but not acyl-CoA.</text>
</comment>
<comment type="catalytic activity">
    <reaction evidence="1">
        <text>a fatty acyl-[ACP] + phosphate = an acyl phosphate + holo-[ACP]</text>
        <dbReference type="Rhea" id="RHEA:42292"/>
        <dbReference type="Rhea" id="RHEA-COMP:9685"/>
        <dbReference type="Rhea" id="RHEA-COMP:14125"/>
        <dbReference type="ChEBI" id="CHEBI:43474"/>
        <dbReference type="ChEBI" id="CHEBI:59918"/>
        <dbReference type="ChEBI" id="CHEBI:64479"/>
        <dbReference type="ChEBI" id="CHEBI:138651"/>
        <dbReference type="EC" id="2.3.1.274"/>
    </reaction>
</comment>
<comment type="pathway">
    <text evidence="1">Lipid metabolism; phospholipid metabolism.</text>
</comment>
<comment type="subunit">
    <text evidence="1">Homodimer. Probably interacts with PlsY.</text>
</comment>
<comment type="subcellular location">
    <subcellularLocation>
        <location evidence="1">Cytoplasm</location>
    </subcellularLocation>
    <text evidence="1">Associated with the membrane possibly through PlsY.</text>
</comment>
<comment type="similarity">
    <text evidence="1">Belongs to the PlsX family.</text>
</comment>
<name>PLSX_CLOB8</name>
<evidence type="ECO:0000255" key="1">
    <source>
        <dbReference type="HAMAP-Rule" id="MF_00019"/>
    </source>
</evidence>
<gene>
    <name evidence="1" type="primary">plsX</name>
    <name type="ordered locus">Cbei_1168</name>
</gene>
<accession>A6LSM0</accession>
<proteinExistence type="inferred from homology"/>
<reference key="1">
    <citation type="submission" date="2007-06" db="EMBL/GenBank/DDBJ databases">
        <title>Complete sequence of Clostridium beijerinckii NCIMB 8052.</title>
        <authorList>
            <consortium name="US DOE Joint Genome Institute"/>
            <person name="Copeland A."/>
            <person name="Lucas S."/>
            <person name="Lapidus A."/>
            <person name="Barry K."/>
            <person name="Detter J.C."/>
            <person name="Glavina del Rio T."/>
            <person name="Hammon N."/>
            <person name="Israni S."/>
            <person name="Dalin E."/>
            <person name="Tice H."/>
            <person name="Pitluck S."/>
            <person name="Sims D."/>
            <person name="Brettin T."/>
            <person name="Bruce D."/>
            <person name="Tapia R."/>
            <person name="Brainard J."/>
            <person name="Schmutz J."/>
            <person name="Larimer F."/>
            <person name="Land M."/>
            <person name="Hauser L."/>
            <person name="Kyrpides N."/>
            <person name="Mikhailova N."/>
            <person name="Bennet G."/>
            <person name="Cann I."/>
            <person name="Chen J.-S."/>
            <person name="Contreras A.L."/>
            <person name="Jones D."/>
            <person name="Kashket E."/>
            <person name="Mitchell W."/>
            <person name="Stoddard S."/>
            <person name="Schwarz W."/>
            <person name="Qureshi N."/>
            <person name="Young M."/>
            <person name="Shi Z."/>
            <person name="Ezeji T."/>
            <person name="White B."/>
            <person name="Blaschek H."/>
            <person name="Richardson P."/>
        </authorList>
    </citation>
    <scope>NUCLEOTIDE SEQUENCE [LARGE SCALE GENOMIC DNA]</scope>
    <source>
        <strain>ATCC 51743 / NCIMB 8052</strain>
    </source>
</reference>
<keyword id="KW-0963">Cytoplasm</keyword>
<keyword id="KW-0444">Lipid biosynthesis</keyword>
<keyword id="KW-0443">Lipid metabolism</keyword>
<keyword id="KW-0594">Phospholipid biosynthesis</keyword>
<keyword id="KW-1208">Phospholipid metabolism</keyword>
<keyword id="KW-0808">Transferase</keyword>
<organism>
    <name type="scientific">Clostridium beijerinckii (strain ATCC 51743 / NCIMB 8052)</name>
    <name type="common">Clostridium acetobutylicum</name>
    <dbReference type="NCBI Taxonomy" id="290402"/>
    <lineage>
        <taxon>Bacteria</taxon>
        <taxon>Bacillati</taxon>
        <taxon>Bacillota</taxon>
        <taxon>Clostridia</taxon>
        <taxon>Eubacteriales</taxon>
        <taxon>Clostridiaceae</taxon>
        <taxon>Clostridium</taxon>
    </lineage>
</organism>